<keyword id="KW-0963">Cytoplasm</keyword>
<keyword id="KW-0312">Gluconeogenesis</keyword>
<keyword id="KW-0324">Glycolysis</keyword>
<keyword id="KW-0413">Isomerase</keyword>
<protein>
    <recommendedName>
        <fullName evidence="1">Triosephosphate isomerase</fullName>
        <shortName evidence="1">TIM</shortName>
        <shortName evidence="1">TPI</shortName>
        <ecNumber evidence="1">5.3.1.1</ecNumber>
    </recommendedName>
    <alternativeName>
        <fullName evidence="1">Triose-phosphate isomerase</fullName>
    </alternativeName>
</protein>
<reference key="1">
    <citation type="journal article" date="2006" name="Proc. Natl. Acad. Sci. U.S.A.">
        <title>Genome reduction in Leptospira borgpetersenii reflects limited transmission potential.</title>
        <authorList>
            <person name="Bulach D.M."/>
            <person name="Zuerner R.L."/>
            <person name="Wilson P."/>
            <person name="Seemann T."/>
            <person name="McGrath A."/>
            <person name="Cullen P.A."/>
            <person name="Davis J."/>
            <person name="Johnson M."/>
            <person name="Kuczek E."/>
            <person name="Alt D.P."/>
            <person name="Peterson-Burch B."/>
            <person name="Coppel R.L."/>
            <person name="Rood J.I."/>
            <person name="Davies J.K."/>
            <person name="Adler B."/>
        </authorList>
    </citation>
    <scope>NUCLEOTIDE SEQUENCE [LARGE SCALE GENOMIC DNA]</scope>
    <source>
        <strain>JB197</strain>
    </source>
</reference>
<comment type="function">
    <text evidence="1">Involved in the gluconeogenesis. Catalyzes stereospecifically the conversion of dihydroxyacetone phosphate (DHAP) to D-glyceraldehyde-3-phosphate (G3P).</text>
</comment>
<comment type="catalytic activity">
    <reaction evidence="1">
        <text>D-glyceraldehyde 3-phosphate = dihydroxyacetone phosphate</text>
        <dbReference type="Rhea" id="RHEA:18585"/>
        <dbReference type="ChEBI" id="CHEBI:57642"/>
        <dbReference type="ChEBI" id="CHEBI:59776"/>
        <dbReference type="EC" id="5.3.1.1"/>
    </reaction>
</comment>
<comment type="pathway">
    <text evidence="1">Carbohydrate biosynthesis; gluconeogenesis.</text>
</comment>
<comment type="pathway">
    <text evidence="1">Carbohydrate degradation; glycolysis; D-glyceraldehyde 3-phosphate from glycerone phosphate: step 1/1.</text>
</comment>
<comment type="subunit">
    <text evidence="1">Homodimer.</text>
</comment>
<comment type="subcellular location">
    <subcellularLocation>
        <location evidence="1">Cytoplasm</location>
    </subcellularLocation>
</comment>
<comment type="similarity">
    <text evidence="1">Belongs to the triosephosphate isomerase family.</text>
</comment>
<name>TPIS_LEPBJ</name>
<evidence type="ECO:0000255" key="1">
    <source>
        <dbReference type="HAMAP-Rule" id="MF_00147"/>
    </source>
</evidence>
<sequence length="250" mass="27248">MRKTVIAGNWKMNLSEKEALSLAHSIKEKIPAISKGRISMIFPSTLHLAGVAKILQGTEILVGAQNVYPSGLAAFTGETSPEQLKELGVKVVMIGHSERRQFLGETNSFCNEKIHFLLKNDFIVLYCVGETLMERESGKTFEVISSQIREGLKGIHSHSFSNLILAYEPVWAIGTGKVATPAQAQEVHFFIRKEIAGLFLGAKEIAESISILYGGSVKPDNIQTLLKEKDLDGGLVGGASQKIDTYAGLF</sequence>
<gene>
    <name evidence="1" type="primary">tpiA</name>
    <name type="ordered locus">LBJ_1218</name>
</gene>
<feature type="chain" id="PRO_0000307494" description="Triosephosphate isomerase">
    <location>
        <begin position="1"/>
        <end position="250"/>
    </location>
</feature>
<feature type="active site" description="Electrophile" evidence="1">
    <location>
        <position position="96"/>
    </location>
</feature>
<feature type="active site" description="Proton acceptor" evidence="1">
    <location>
        <position position="168"/>
    </location>
</feature>
<feature type="binding site" evidence="1">
    <location>
        <begin position="9"/>
        <end position="11"/>
    </location>
    <ligand>
        <name>substrate</name>
    </ligand>
</feature>
<feature type="binding site" evidence="1">
    <location>
        <position position="174"/>
    </location>
    <ligand>
        <name>substrate</name>
    </ligand>
</feature>
<feature type="binding site" evidence="1">
    <location>
        <position position="216"/>
    </location>
    <ligand>
        <name>substrate</name>
    </ligand>
</feature>
<feature type="binding site" evidence="1">
    <location>
        <begin position="237"/>
        <end position="238"/>
    </location>
    <ligand>
        <name>substrate</name>
    </ligand>
</feature>
<accession>Q04TF0</accession>
<proteinExistence type="inferred from homology"/>
<dbReference type="EC" id="5.3.1.1" evidence="1"/>
<dbReference type="EMBL" id="CP000350">
    <property type="protein sequence ID" value="ABJ75820.1"/>
    <property type="molecule type" value="Genomic_DNA"/>
</dbReference>
<dbReference type="RefSeq" id="WP_011669999.1">
    <property type="nucleotide sequence ID" value="NC_008510.1"/>
</dbReference>
<dbReference type="SMR" id="Q04TF0"/>
<dbReference type="KEGG" id="lbj:LBJ_1218"/>
<dbReference type="HOGENOM" id="CLU_024251_2_3_12"/>
<dbReference type="UniPathway" id="UPA00109">
    <property type="reaction ID" value="UER00189"/>
</dbReference>
<dbReference type="UniPathway" id="UPA00138"/>
<dbReference type="Proteomes" id="UP000000656">
    <property type="component" value="Chromosome 1"/>
</dbReference>
<dbReference type="GO" id="GO:0005829">
    <property type="term" value="C:cytosol"/>
    <property type="evidence" value="ECO:0007669"/>
    <property type="project" value="TreeGrafter"/>
</dbReference>
<dbReference type="GO" id="GO:0004807">
    <property type="term" value="F:triose-phosphate isomerase activity"/>
    <property type="evidence" value="ECO:0007669"/>
    <property type="project" value="UniProtKB-UniRule"/>
</dbReference>
<dbReference type="GO" id="GO:0006094">
    <property type="term" value="P:gluconeogenesis"/>
    <property type="evidence" value="ECO:0007669"/>
    <property type="project" value="UniProtKB-UniRule"/>
</dbReference>
<dbReference type="GO" id="GO:0046166">
    <property type="term" value="P:glyceraldehyde-3-phosphate biosynthetic process"/>
    <property type="evidence" value="ECO:0007669"/>
    <property type="project" value="TreeGrafter"/>
</dbReference>
<dbReference type="GO" id="GO:0019563">
    <property type="term" value="P:glycerol catabolic process"/>
    <property type="evidence" value="ECO:0007669"/>
    <property type="project" value="TreeGrafter"/>
</dbReference>
<dbReference type="GO" id="GO:0006096">
    <property type="term" value="P:glycolytic process"/>
    <property type="evidence" value="ECO:0007669"/>
    <property type="project" value="UniProtKB-UniRule"/>
</dbReference>
<dbReference type="CDD" id="cd00311">
    <property type="entry name" value="TIM"/>
    <property type="match status" value="1"/>
</dbReference>
<dbReference type="FunFam" id="3.20.20.70:FF:000016">
    <property type="entry name" value="Triosephosphate isomerase"/>
    <property type="match status" value="1"/>
</dbReference>
<dbReference type="Gene3D" id="3.20.20.70">
    <property type="entry name" value="Aldolase class I"/>
    <property type="match status" value="1"/>
</dbReference>
<dbReference type="HAMAP" id="MF_00147_B">
    <property type="entry name" value="TIM_B"/>
    <property type="match status" value="1"/>
</dbReference>
<dbReference type="InterPro" id="IPR013785">
    <property type="entry name" value="Aldolase_TIM"/>
</dbReference>
<dbReference type="InterPro" id="IPR035990">
    <property type="entry name" value="TIM_sf"/>
</dbReference>
<dbReference type="InterPro" id="IPR022896">
    <property type="entry name" value="TrioseP_Isoase_bac/euk"/>
</dbReference>
<dbReference type="InterPro" id="IPR000652">
    <property type="entry name" value="Triosephosphate_isomerase"/>
</dbReference>
<dbReference type="InterPro" id="IPR020861">
    <property type="entry name" value="Triosephosphate_isomerase_AS"/>
</dbReference>
<dbReference type="NCBIfam" id="TIGR00419">
    <property type="entry name" value="tim"/>
    <property type="match status" value="1"/>
</dbReference>
<dbReference type="PANTHER" id="PTHR21139">
    <property type="entry name" value="TRIOSEPHOSPHATE ISOMERASE"/>
    <property type="match status" value="1"/>
</dbReference>
<dbReference type="PANTHER" id="PTHR21139:SF42">
    <property type="entry name" value="TRIOSEPHOSPHATE ISOMERASE"/>
    <property type="match status" value="1"/>
</dbReference>
<dbReference type="Pfam" id="PF00121">
    <property type="entry name" value="TIM"/>
    <property type="match status" value="1"/>
</dbReference>
<dbReference type="SUPFAM" id="SSF51351">
    <property type="entry name" value="Triosephosphate isomerase (TIM)"/>
    <property type="match status" value="1"/>
</dbReference>
<dbReference type="PROSITE" id="PS00171">
    <property type="entry name" value="TIM_1"/>
    <property type="match status" value="1"/>
</dbReference>
<dbReference type="PROSITE" id="PS51440">
    <property type="entry name" value="TIM_2"/>
    <property type="match status" value="1"/>
</dbReference>
<organism>
    <name type="scientific">Leptospira borgpetersenii serovar Hardjo-bovis (strain JB197)</name>
    <dbReference type="NCBI Taxonomy" id="355277"/>
    <lineage>
        <taxon>Bacteria</taxon>
        <taxon>Pseudomonadati</taxon>
        <taxon>Spirochaetota</taxon>
        <taxon>Spirochaetia</taxon>
        <taxon>Leptospirales</taxon>
        <taxon>Leptospiraceae</taxon>
        <taxon>Leptospira</taxon>
    </lineage>
</organism>